<accession>O14166</accession>
<organism>
    <name type="scientific">Schizosaccharomyces pombe (strain 972 / ATCC 24843)</name>
    <name type="common">Fission yeast</name>
    <dbReference type="NCBI Taxonomy" id="284812"/>
    <lineage>
        <taxon>Eukaryota</taxon>
        <taxon>Fungi</taxon>
        <taxon>Dikarya</taxon>
        <taxon>Ascomycota</taxon>
        <taxon>Taphrinomycotina</taxon>
        <taxon>Schizosaccharomycetes</taxon>
        <taxon>Schizosaccharomycetales</taxon>
        <taxon>Schizosaccharomycetaceae</taxon>
        <taxon>Schizosaccharomyces</taxon>
    </lineage>
</organism>
<proteinExistence type="predicted"/>
<gene>
    <name type="ORF">SPAC4C5.03</name>
</gene>
<protein>
    <recommendedName>
        <fullName>Uncharacterized protein C4C5.03</fullName>
    </recommendedName>
</protein>
<feature type="chain" id="PRO_0000116676" description="Uncharacterized protein C4C5.03">
    <location>
        <begin position="1"/>
        <end position="302"/>
    </location>
</feature>
<feature type="transmembrane region" description="Helical" evidence="1">
    <location>
        <begin position="25"/>
        <end position="45"/>
    </location>
</feature>
<feature type="transmembrane region" description="Helical" evidence="1">
    <location>
        <begin position="58"/>
        <end position="78"/>
    </location>
</feature>
<feature type="transmembrane region" description="Helical" evidence="1">
    <location>
        <begin position="104"/>
        <end position="124"/>
    </location>
</feature>
<feature type="transmembrane region" description="Helical" evidence="1">
    <location>
        <begin position="158"/>
        <end position="178"/>
    </location>
</feature>
<feature type="transmembrane region" description="Helical" evidence="1">
    <location>
        <begin position="182"/>
        <end position="202"/>
    </location>
</feature>
<feature type="transmembrane region" description="Helical" evidence="1">
    <location>
        <begin position="215"/>
        <end position="235"/>
    </location>
</feature>
<feature type="transmembrane region" description="Helical" evidence="1">
    <location>
        <begin position="247"/>
        <end position="267"/>
    </location>
</feature>
<feature type="domain" description="PQ-loop">
    <location>
        <begin position="175"/>
        <end position="245"/>
    </location>
</feature>
<sequence length="302" mass="33854">MEFSTSSFIFDDDTPPKCPLATKASFIFSVYIIIGLIISYLLQIFRIVRLGSSQGLSFSYLILGYIGVLNAFSNVIALQISPLTECCQNYYSKKQCFANTTGLIQVGSQVLIMGCVLMAFWMFLPRPIHFVAADDENGLPIPEPLSVTKSRKWRKASYGLLGVFTWGLFIICLSATVLSSNFAWAAFLGFSASFCAVVQYVPQIIKTIRHQSHGALSIPMMMMQTPGGFLIGYLLSRLPGTNWTTYMMYIVSACLQGLLLMLCMFYLHKEKSRRKREELQATLQEEESQRAVRILEAETGPE</sequence>
<comment type="subcellular location">
    <subcellularLocation>
        <location evidence="2">Membrane</location>
        <topology evidence="2">Multi-pass membrane protein</topology>
    </subcellularLocation>
</comment>
<dbReference type="EMBL" id="CU329670">
    <property type="protein sequence ID" value="CAB11174.1"/>
    <property type="molecule type" value="Genomic_DNA"/>
</dbReference>
<dbReference type="PIR" id="T38789">
    <property type="entry name" value="T38789"/>
</dbReference>
<dbReference type="RefSeq" id="NP_593250.1">
    <property type="nucleotide sequence ID" value="NM_001018647.2"/>
</dbReference>
<dbReference type="SMR" id="O14166"/>
<dbReference type="BioGRID" id="280005">
    <property type="interactions" value="18"/>
</dbReference>
<dbReference type="TCDB" id="2.A.43.4.1">
    <property type="family name" value="the lysosomal cystine transporter (lct) family"/>
</dbReference>
<dbReference type="SwissPalm" id="O14166"/>
<dbReference type="PaxDb" id="4896-SPAC4C5.03.1"/>
<dbReference type="EnsemblFungi" id="SPAC4C5.03.1">
    <property type="protein sequence ID" value="SPAC4C5.03.1:pep"/>
    <property type="gene ID" value="SPAC4C5.03"/>
</dbReference>
<dbReference type="KEGG" id="spo:2543590"/>
<dbReference type="PomBase" id="SPAC4C5.03"/>
<dbReference type="VEuPathDB" id="FungiDB:SPAC4C5.03"/>
<dbReference type="eggNOG" id="ENOG502QV5C">
    <property type="taxonomic scope" value="Eukaryota"/>
</dbReference>
<dbReference type="HOGENOM" id="CLU_033734_1_0_1"/>
<dbReference type="InParanoid" id="O14166"/>
<dbReference type="OMA" id="FVIYFPR"/>
<dbReference type="PhylomeDB" id="O14166"/>
<dbReference type="PRO" id="PR:O14166"/>
<dbReference type="Proteomes" id="UP000002485">
    <property type="component" value="Chromosome I"/>
</dbReference>
<dbReference type="GO" id="GO:0016020">
    <property type="term" value="C:membrane"/>
    <property type="evidence" value="ECO:0000318"/>
    <property type="project" value="GO_Central"/>
</dbReference>
<dbReference type="Gene3D" id="1.20.1280.290">
    <property type="match status" value="1"/>
</dbReference>
<dbReference type="InterPro" id="IPR051415">
    <property type="entry name" value="LAAT-1"/>
</dbReference>
<dbReference type="InterPro" id="IPR006603">
    <property type="entry name" value="PQ-loop_rpt"/>
</dbReference>
<dbReference type="PANTHER" id="PTHR16201:SF11">
    <property type="entry name" value="PQ-LOOP REPEAT-CONTAINING PROTEIN"/>
    <property type="match status" value="1"/>
</dbReference>
<dbReference type="PANTHER" id="PTHR16201">
    <property type="entry name" value="SEVEN TRANSMEMBRANE PROTEIN 1-RELATED"/>
    <property type="match status" value="1"/>
</dbReference>
<dbReference type="Pfam" id="PF04193">
    <property type="entry name" value="PQ-loop"/>
    <property type="match status" value="1"/>
</dbReference>
<dbReference type="SMART" id="SM00679">
    <property type="entry name" value="CTNS"/>
    <property type="match status" value="2"/>
</dbReference>
<name>YDX3_SCHPO</name>
<keyword id="KW-0472">Membrane</keyword>
<keyword id="KW-1185">Reference proteome</keyword>
<keyword id="KW-0812">Transmembrane</keyword>
<keyword id="KW-1133">Transmembrane helix</keyword>
<evidence type="ECO:0000255" key="1"/>
<evidence type="ECO:0000305" key="2"/>
<reference key="1">
    <citation type="journal article" date="2002" name="Nature">
        <title>The genome sequence of Schizosaccharomyces pombe.</title>
        <authorList>
            <person name="Wood V."/>
            <person name="Gwilliam R."/>
            <person name="Rajandream M.A."/>
            <person name="Lyne M.H."/>
            <person name="Lyne R."/>
            <person name="Stewart A."/>
            <person name="Sgouros J.G."/>
            <person name="Peat N."/>
            <person name="Hayles J."/>
            <person name="Baker S.G."/>
            <person name="Basham D."/>
            <person name="Bowman S."/>
            <person name="Brooks K."/>
            <person name="Brown D."/>
            <person name="Brown S."/>
            <person name="Chillingworth T."/>
            <person name="Churcher C.M."/>
            <person name="Collins M."/>
            <person name="Connor R."/>
            <person name="Cronin A."/>
            <person name="Davis P."/>
            <person name="Feltwell T."/>
            <person name="Fraser A."/>
            <person name="Gentles S."/>
            <person name="Goble A."/>
            <person name="Hamlin N."/>
            <person name="Harris D.E."/>
            <person name="Hidalgo J."/>
            <person name="Hodgson G."/>
            <person name="Holroyd S."/>
            <person name="Hornsby T."/>
            <person name="Howarth S."/>
            <person name="Huckle E.J."/>
            <person name="Hunt S."/>
            <person name="Jagels K."/>
            <person name="James K.D."/>
            <person name="Jones L."/>
            <person name="Jones M."/>
            <person name="Leather S."/>
            <person name="McDonald S."/>
            <person name="McLean J."/>
            <person name="Mooney P."/>
            <person name="Moule S."/>
            <person name="Mungall K.L."/>
            <person name="Murphy L.D."/>
            <person name="Niblett D."/>
            <person name="Odell C."/>
            <person name="Oliver K."/>
            <person name="O'Neil S."/>
            <person name="Pearson D."/>
            <person name="Quail M.A."/>
            <person name="Rabbinowitsch E."/>
            <person name="Rutherford K.M."/>
            <person name="Rutter S."/>
            <person name="Saunders D."/>
            <person name="Seeger K."/>
            <person name="Sharp S."/>
            <person name="Skelton J."/>
            <person name="Simmonds M.N."/>
            <person name="Squares R."/>
            <person name="Squares S."/>
            <person name="Stevens K."/>
            <person name="Taylor K."/>
            <person name="Taylor R.G."/>
            <person name="Tivey A."/>
            <person name="Walsh S.V."/>
            <person name="Warren T."/>
            <person name="Whitehead S."/>
            <person name="Woodward J.R."/>
            <person name="Volckaert G."/>
            <person name="Aert R."/>
            <person name="Robben J."/>
            <person name="Grymonprez B."/>
            <person name="Weltjens I."/>
            <person name="Vanstreels E."/>
            <person name="Rieger M."/>
            <person name="Schaefer M."/>
            <person name="Mueller-Auer S."/>
            <person name="Gabel C."/>
            <person name="Fuchs M."/>
            <person name="Duesterhoeft A."/>
            <person name="Fritzc C."/>
            <person name="Holzer E."/>
            <person name="Moestl D."/>
            <person name="Hilbert H."/>
            <person name="Borzym K."/>
            <person name="Langer I."/>
            <person name="Beck A."/>
            <person name="Lehrach H."/>
            <person name="Reinhardt R."/>
            <person name="Pohl T.M."/>
            <person name="Eger P."/>
            <person name="Zimmermann W."/>
            <person name="Wedler H."/>
            <person name="Wambutt R."/>
            <person name="Purnelle B."/>
            <person name="Goffeau A."/>
            <person name="Cadieu E."/>
            <person name="Dreano S."/>
            <person name="Gloux S."/>
            <person name="Lelaure V."/>
            <person name="Mottier S."/>
            <person name="Galibert F."/>
            <person name="Aves S.J."/>
            <person name="Xiang Z."/>
            <person name="Hunt C."/>
            <person name="Moore K."/>
            <person name="Hurst S.M."/>
            <person name="Lucas M."/>
            <person name="Rochet M."/>
            <person name="Gaillardin C."/>
            <person name="Tallada V.A."/>
            <person name="Garzon A."/>
            <person name="Thode G."/>
            <person name="Daga R.R."/>
            <person name="Cruzado L."/>
            <person name="Jimenez J."/>
            <person name="Sanchez M."/>
            <person name="del Rey F."/>
            <person name="Benito J."/>
            <person name="Dominguez A."/>
            <person name="Revuelta J.L."/>
            <person name="Moreno S."/>
            <person name="Armstrong J."/>
            <person name="Forsburg S.L."/>
            <person name="Cerutti L."/>
            <person name="Lowe T."/>
            <person name="McCombie W.R."/>
            <person name="Paulsen I."/>
            <person name="Potashkin J."/>
            <person name="Shpakovski G.V."/>
            <person name="Ussery D."/>
            <person name="Barrell B.G."/>
            <person name="Nurse P."/>
        </authorList>
    </citation>
    <scope>NUCLEOTIDE SEQUENCE [LARGE SCALE GENOMIC DNA]</scope>
    <source>
        <strain>972 / ATCC 24843</strain>
    </source>
</reference>